<evidence type="ECO:0000255" key="1">
    <source>
        <dbReference type="HAMAP-Rule" id="MF_01102"/>
    </source>
</evidence>
<keyword id="KW-0963">Cytoplasm</keyword>
<keyword id="KW-0274">FAD</keyword>
<keyword id="KW-0285">Flavoprotein</keyword>
<keyword id="KW-0489">Methyltransferase</keyword>
<keyword id="KW-0511">Multifunctional enzyme</keyword>
<keyword id="KW-0560">Oxidoreductase</keyword>
<keyword id="KW-0949">S-adenosyl-L-methionine</keyword>
<keyword id="KW-0808">Transferase</keyword>
<keyword id="KW-0819">tRNA processing</keyword>
<name>MNMC_ECTM1</name>
<proteinExistence type="inferred from homology"/>
<protein>
    <recommendedName>
        <fullName evidence="1">tRNA 5-methylaminomethyl-2-thiouridine biosynthesis bifunctional protein MnmC</fullName>
        <shortName evidence="1">tRNA mnm(5)s(2)U biosynthesis bifunctional protein</shortName>
    </recommendedName>
    <domain>
        <recommendedName>
            <fullName evidence="1">tRNA (mnm(5)s(2)U34)-methyltransferase</fullName>
            <ecNumber evidence="1">2.1.1.61</ecNumber>
        </recommendedName>
    </domain>
    <domain>
        <recommendedName>
            <fullName evidence="1">FAD-dependent cmnm(5)s(2)U34 oxidoreductase</fullName>
            <ecNumber evidence="1">1.5.-.-</ecNumber>
        </recommendedName>
    </domain>
</protein>
<gene>
    <name evidence="1" type="primary">mnmC</name>
    <name type="ordered locus">Pmen_3230</name>
</gene>
<feature type="chain" id="PRO_0000348011" description="tRNA 5-methylaminomethyl-2-thiouridine biosynthesis bifunctional protein MnmC">
    <location>
        <begin position="1"/>
        <end position="657"/>
    </location>
</feature>
<feature type="region of interest" description="tRNA (mnm(5)s(2)U34)-methyltransferase">
    <location>
        <begin position="1"/>
        <end position="235"/>
    </location>
</feature>
<feature type="region of interest" description="FAD-dependent cmnm(5)s(2)U34 oxidoreductase">
    <location>
        <begin position="261"/>
        <end position="657"/>
    </location>
</feature>
<organism>
    <name type="scientific">Ectopseudomonas mendocina (strain ymp)</name>
    <name type="common">Pseudomonas mendocina</name>
    <dbReference type="NCBI Taxonomy" id="399739"/>
    <lineage>
        <taxon>Bacteria</taxon>
        <taxon>Pseudomonadati</taxon>
        <taxon>Pseudomonadota</taxon>
        <taxon>Gammaproteobacteria</taxon>
        <taxon>Pseudomonadales</taxon>
        <taxon>Pseudomonadaceae</taxon>
        <taxon>Ectopseudomonas</taxon>
    </lineage>
</organism>
<comment type="function">
    <text evidence="1">Catalyzes the last two steps in the biosynthesis of 5-methylaminomethyl-2-thiouridine (mnm(5)s(2)U) at the wobble position (U34) in tRNA. Catalyzes the FAD-dependent demodification of cmnm(5)s(2)U34 to nm(5)s(2)U34, followed by the transfer of a methyl group from S-adenosyl-L-methionine to nm(5)s(2)U34, to form mnm(5)s(2)U34.</text>
</comment>
<comment type="catalytic activity">
    <reaction evidence="1">
        <text>5-aminomethyl-2-thiouridine(34) in tRNA + S-adenosyl-L-methionine = 5-methylaminomethyl-2-thiouridine(34) in tRNA + S-adenosyl-L-homocysteine + H(+)</text>
        <dbReference type="Rhea" id="RHEA:19569"/>
        <dbReference type="Rhea" id="RHEA-COMP:10195"/>
        <dbReference type="Rhea" id="RHEA-COMP:10197"/>
        <dbReference type="ChEBI" id="CHEBI:15378"/>
        <dbReference type="ChEBI" id="CHEBI:57856"/>
        <dbReference type="ChEBI" id="CHEBI:59789"/>
        <dbReference type="ChEBI" id="CHEBI:74454"/>
        <dbReference type="ChEBI" id="CHEBI:74455"/>
        <dbReference type="EC" id="2.1.1.61"/>
    </reaction>
</comment>
<comment type="cofactor">
    <cofactor evidence="1">
        <name>FAD</name>
        <dbReference type="ChEBI" id="CHEBI:57692"/>
    </cofactor>
</comment>
<comment type="subcellular location">
    <subcellularLocation>
        <location evidence="1">Cytoplasm</location>
    </subcellularLocation>
</comment>
<comment type="similarity">
    <text evidence="1">In the N-terminal section; belongs to the methyltransferase superfamily. tRNA (mnm(5)s(2)U34)-methyltransferase family.</text>
</comment>
<comment type="similarity">
    <text evidence="1">In the C-terminal section; belongs to the DAO family.</text>
</comment>
<accession>A4XXB7</accession>
<reference key="1">
    <citation type="submission" date="2007-04" db="EMBL/GenBank/DDBJ databases">
        <title>Complete sequence of Pseudomonas mendocina ymp.</title>
        <authorList>
            <consortium name="US DOE Joint Genome Institute"/>
            <person name="Copeland A."/>
            <person name="Lucas S."/>
            <person name="Lapidus A."/>
            <person name="Barry K."/>
            <person name="Glavina del Rio T."/>
            <person name="Dalin E."/>
            <person name="Tice H."/>
            <person name="Pitluck S."/>
            <person name="Kiss H."/>
            <person name="Brettin T."/>
            <person name="Detter J.C."/>
            <person name="Bruce D."/>
            <person name="Han C."/>
            <person name="Schmutz J."/>
            <person name="Larimer F."/>
            <person name="Land M."/>
            <person name="Hauser L."/>
            <person name="Kyrpides N."/>
            <person name="Mikhailova N."/>
            <person name="Hersman L."/>
            <person name="Dubois J."/>
            <person name="Maurice P."/>
            <person name="Richardson P."/>
        </authorList>
    </citation>
    <scope>NUCLEOTIDE SEQUENCE [LARGE SCALE GENOMIC DNA]</scope>
    <source>
        <strain>ymp</strain>
    </source>
</reference>
<dbReference type="EC" id="2.1.1.61" evidence="1"/>
<dbReference type="EC" id="1.5.-.-" evidence="1"/>
<dbReference type="EMBL" id="CP000680">
    <property type="protein sequence ID" value="ABP85983.1"/>
    <property type="molecule type" value="Genomic_DNA"/>
</dbReference>
<dbReference type="SMR" id="A4XXB7"/>
<dbReference type="STRING" id="399739.Pmen_3230"/>
<dbReference type="KEGG" id="pmy:Pmen_3230"/>
<dbReference type="PATRIC" id="fig|399739.8.peg.3275"/>
<dbReference type="eggNOG" id="COG0665">
    <property type="taxonomic scope" value="Bacteria"/>
</dbReference>
<dbReference type="eggNOG" id="COG4121">
    <property type="taxonomic scope" value="Bacteria"/>
</dbReference>
<dbReference type="HOGENOM" id="CLU_022427_1_0_6"/>
<dbReference type="OrthoDB" id="9786494at2"/>
<dbReference type="GO" id="GO:0005737">
    <property type="term" value="C:cytoplasm"/>
    <property type="evidence" value="ECO:0007669"/>
    <property type="project" value="UniProtKB-SubCell"/>
</dbReference>
<dbReference type="GO" id="GO:0050660">
    <property type="term" value="F:flavin adenine dinucleotide binding"/>
    <property type="evidence" value="ECO:0007669"/>
    <property type="project" value="UniProtKB-UniRule"/>
</dbReference>
<dbReference type="GO" id="GO:0016645">
    <property type="term" value="F:oxidoreductase activity, acting on the CH-NH group of donors"/>
    <property type="evidence" value="ECO:0007669"/>
    <property type="project" value="InterPro"/>
</dbReference>
<dbReference type="GO" id="GO:0004808">
    <property type="term" value="F:tRNA (5-methylaminomethyl-2-thiouridylate)(34)-methyltransferase activity"/>
    <property type="evidence" value="ECO:0007669"/>
    <property type="project" value="UniProtKB-EC"/>
</dbReference>
<dbReference type="GO" id="GO:0032259">
    <property type="term" value="P:methylation"/>
    <property type="evidence" value="ECO:0007669"/>
    <property type="project" value="UniProtKB-KW"/>
</dbReference>
<dbReference type="GO" id="GO:0002098">
    <property type="term" value="P:tRNA wobble uridine modification"/>
    <property type="evidence" value="ECO:0007669"/>
    <property type="project" value="TreeGrafter"/>
</dbReference>
<dbReference type="Gene3D" id="3.30.9.10">
    <property type="entry name" value="D-Amino Acid Oxidase, subunit A, domain 2"/>
    <property type="match status" value="1"/>
</dbReference>
<dbReference type="Gene3D" id="3.50.50.60">
    <property type="entry name" value="FAD/NAD(P)-binding domain"/>
    <property type="match status" value="1"/>
</dbReference>
<dbReference type="Gene3D" id="3.40.50.150">
    <property type="entry name" value="Vaccinia Virus protein VP39"/>
    <property type="match status" value="1"/>
</dbReference>
<dbReference type="HAMAP" id="MF_01102">
    <property type="entry name" value="MnmC"/>
    <property type="match status" value="1"/>
</dbReference>
<dbReference type="InterPro" id="IPR006076">
    <property type="entry name" value="FAD-dep_OxRdtase"/>
</dbReference>
<dbReference type="InterPro" id="IPR036188">
    <property type="entry name" value="FAD/NAD-bd_sf"/>
</dbReference>
<dbReference type="InterPro" id="IPR008471">
    <property type="entry name" value="MnmC-like_methylTransf"/>
</dbReference>
<dbReference type="InterPro" id="IPR029063">
    <property type="entry name" value="SAM-dependent_MTases_sf"/>
</dbReference>
<dbReference type="InterPro" id="IPR023032">
    <property type="entry name" value="tRNA_MAMT_biosynth_bifunc_MnmC"/>
</dbReference>
<dbReference type="InterPro" id="IPR047785">
    <property type="entry name" value="tRNA_MNMC2"/>
</dbReference>
<dbReference type="InterPro" id="IPR017610">
    <property type="entry name" value="tRNA_S-uridine_synth_MnmC_C"/>
</dbReference>
<dbReference type="NCBIfam" id="TIGR03197">
    <property type="entry name" value="MnmC_Cterm"/>
    <property type="match status" value="1"/>
</dbReference>
<dbReference type="NCBIfam" id="NF002481">
    <property type="entry name" value="PRK01747.1-2"/>
    <property type="match status" value="1"/>
</dbReference>
<dbReference type="NCBIfam" id="NF033855">
    <property type="entry name" value="tRNA_MNMC2"/>
    <property type="match status" value="1"/>
</dbReference>
<dbReference type="PANTHER" id="PTHR13847">
    <property type="entry name" value="SARCOSINE DEHYDROGENASE-RELATED"/>
    <property type="match status" value="1"/>
</dbReference>
<dbReference type="PANTHER" id="PTHR13847:SF283">
    <property type="entry name" value="TRNA 5-METHYLAMINOMETHYL-2-THIOURIDINE BIOSYNTHESIS BIFUNCTIONAL PROTEIN MNMC"/>
    <property type="match status" value="1"/>
</dbReference>
<dbReference type="Pfam" id="PF01266">
    <property type="entry name" value="DAO"/>
    <property type="match status" value="1"/>
</dbReference>
<dbReference type="Pfam" id="PF05430">
    <property type="entry name" value="Methyltransf_30"/>
    <property type="match status" value="1"/>
</dbReference>
<dbReference type="SUPFAM" id="SSF51905">
    <property type="entry name" value="FAD/NAD(P)-binding domain"/>
    <property type="match status" value="1"/>
</dbReference>
<dbReference type="SUPFAM" id="SSF53335">
    <property type="entry name" value="S-adenosyl-L-methionine-dependent methyltransferases"/>
    <property type="match status" value="1"/>
</dbReference>
<sequence length="657" mass="71335">MSDAHNAQLDWDEHGQPLSRSYGDVYFSRANGLEETRHVFLAHNQIIERCQALPAGGRLVIGETGFGTGLNFLCAWQAFAEHAPRDARLHFVSVEKFPLTQTDLQRALALWPELAPYAEQLLAQYRAIHPGFQRLLLDGGRVVLTLMIGDVLECLPQLDARIDAWFLDGFAPAKNPEMWTDSLFTELARLSAPGATLATFTSAGFVRRGLIAAGFAVQRVKGFGHKREMLAGPFQAEPAPRSAPWFARPTLAAGARQAVVIGAGLAGCATAASLAARGWRVTLLERHDDVAREASGNPQGVLYLKLSAHGTVLSRLIVAGFGHTRRLLERLQRGSDWDACGVLQLAFDAKEAERQNKLAAAFPDDLLHALPQTEAEARAGIGLPAGGLFYPDAGWVHPPALCRQLAQHPLIELRPYQEALSLSRQQERWCVEGQNGVLAEAPVLILACAAEIGRLLPEANLPLKRIRGQISRLPANESSSALRTVVCAEGYVAPARDDEHTLGASFDFHSDDLTPSVAEHAGNLELLREISQDLAERLDTQTLDPATLQGRAAFRCTSPDYLPLVGPLAAGQAFNQAYAVLAKDARQVPETPCPWLDGLYINSGHGSRGLITAPLSGELIAAWLEDEPLPLPREVAEACHPNRFMLRQLIRGTGSPT</sequence>